<gene>
    <name type="ordered locus">MJ0213</name>
</gene>
<keyword id="KW-1185">Reference proteome</keyword>
<proteinExistence type="predicted"/>
<sequence length="149" mass="17269">MLNSIKLSAIVHATEDEDKVLEAIEFFIPENVDEEKIDLDVVETQGYFGNPIKIINVNVEGKEAKKIFKHIIDLIKSDDKNINKLKKDLHLRVEDNKFYVRFDKQKAYLGECRVVDGDDIIRAVFNFKIFTPKNKEEKVKEIVANELGF</sequence>
<name>Y213_METJA</name>
<feature type="chain" id="PRO_0000106744" description="Uncharacterized protein MJ0213">
    <location>
        <begin position="1"/>
        <end position="149"/>
    </location>
</feature>
<dbReference type="EMBL" id="L77117">
    <property type="protein sequence ID" value="AAB98204.1"/>
    <property type="molecule type" value="Genomic_DNA"/>
</dbReference>
<dbReference type="PIR" id="F64326">
    <property type="entry name" value="F64326"/>
</dbReference>
<dbReference type="RefSeq" id="WP_010869709.1">
    <property type="nucleotide sequence ID" value="NC_000909.1"/>
</dbReference>
<dbReference type="SMR" id="Q57666"/>
<dbReference type="FunCoup" id="Q57666">
    <property type="interactions" value="3"/>
</dbReference>
<dbReference type="STRING" id="243232.MJ_0213"/>
<dbReference type="PaxDb" id="243232-MJ_0213"/>
<dbReference type="EnsemblBacteria" id="AAB98204">
    <property type="protein sequence ID" value="AAB98204"/>
    <property type="gene ID" value="MJ_0213"/>
</dbReference>
<dbReference type="GeneID" id="1451063"/>
<dbReference type="KEGG" id="mja:MJ_0213"/>
<dbReference type="eggNOG" id="arCOG01042">
    <property type="taxonomic scope" value="Archaea"/>
</dbReference>
<dbReference type="HOGENOM" id="CLU_131306_1_1_2"/>
<dbReference type="InParanoid" id="Q57666"/>
<dbReference type="OrthoDB" id="10874at2157"/>
<dbReference type="PhylomeDB" id="Q57666"/>
<dbReference type="Proteomes" id="UP000000805">
    <property type="component" value="Chromosome"/>
</dbReference>
<dbReference type="Gene3D" id="3.30.1440.10">
    <property type="match status" value="1"/>
</dbReference>
<dbReference type="InterPro" id="IPR002739">
    <property type="entry name" value="PAB1135-like"/>
</dbReference>
<dbReference type="InterPro" id="IPR022803">
    <property type="entry name" value="Ribosomal_uL5_dom_sf"/>
</dbReference>
<dbReference type="PANTHER" id="PTHR38816:SF1">
    <property type="entry name" value="EXOSOME SUBUNIT"/>
    <property type="match status" value="1"/>
</dbReference>
<dbReference type="PANTHER" id="PTHR38816">
    <property type="entry name" value="EXOSOME SUBUNIT, DUF54 FAMILY-RELATED"/>
    <property type="match status" value="1"/>
</dbReference>
<dbReference type="Pfam" id="PF01877">
    <property type="entry name" value="RNA_binding"/>
    <property type="match status" value="1"/>
</dbReference>
<dbReference type="SUPFAM" id="SSF55282">
    <property type="entry name" value="RL5-like"/>
    <property type="match status" value="1"/>
</dbReference>
<reference key="1">
    <citation type="journal article" date="1996" name="Science">
        <title>Complete genome sequence of the methanogenic archaeon, Methanococcus jannaschii.</title>
        <authorList>
            <person name="Bult C.J."/>
            <person name="White O."/>
            <person name="Olsen G.J."/>
            <person name="Zhou L."/>
            <person name="Fleischmann R.D."/>
            <person name="Sutton G.G."/>
            <person name="Blake J.A."/>
            <person name="FitzGerald L.M."/>
            <person name="Clayton R.A."/>
            <person name="Gocayne J.D."/>
            <person name="Kerlavage A.R."/>
            <person name="Dougherty B.A."/>
            <person name="Tomb J.-F."/>
            <person name="Adams M.D."/>
            <person name="Reich C.I."/>
            <person name="Overbeek R."/>
            <person name="Kirkness E.F."/>
            <person name="Weinstock K.G."/>
            <person name="Merrick J.M."/>
            <person name="Glodek A."/>
            <person name="Scott J.L."/>
            <person name="Geoghagen N.S.M."/>
            <person name="Weidman J.F."/>
            <person name="Fuhrmann J.L."/>
            <person name="Nguyen D."/>
            <person name="Utterback T.R."/>
            <person name="Kelley J.M."/>
            <person name="Peterson J.D."/>
            <person name="Sadow P.W."/>
            <person name="Hanna M.C."/>
            <person name="Cotton M.D."/>
            <person name="Roberts K.M."/>
            <person name="Hurst M.A."/>
            <person name="Kaine B.P."/>
            <person name="Borodovsky M."/>
            <person name="Klenk H.-P."/>
            <person name="Fraser C.M."/>
            <person name="Smith H.O."/>
            <person name="Woese C.R."/>
            <person name="Venter J.C."/>
        </authorList>
    </citation>
    <scope>NUCLEOTIDE SEQUENCE [LARGE SCALE GENOMIC DNA]</scope>
    <source>
        <strain>ATCC 43067 / DSM 2661 / JAL-1 / JCM 10045 / NBRC 100440</strain>
    </source>
</reference>
<accession>Q57666</accession>
<protein>
    <recommendedName>
        <fullName>Uncharacterized protein MJ0213</fullName>
    </recommendedName>
</protein>
<organism>
    <name type="scientific">Methanocaldococcus jannaschii (strain ATCC 43067 / DSM 2661 / JAL-1 / JCM 10045 / NBRC 100440)</name>
    <name type="common">Methanococcus jannaschii</name>
    <dbReference type="NCBI Taxonomy" id="243232"/>
    <lineage>
        <taxon>Archaea</taxon>
        <taxon>Methanobacteriati</taxon>
        <taxon>Methanobacteriota</taxon>
        <taxon>Methanomada group</taxon>
        <taxon>Methanococci</taxon>
        <taxon>Methanococcales</taxon>
        <taxon>Methanocaldococcaceae</taxon>
        <taxon>Methanocaldococcus</taxon>
    </lineage>
</organism>